<name>COX3_PELSU</name>
<proteinExistence type="inferred from homology"/>
<organism>
    <name type="scientific">Pelomedusa subrufa</name>
    <name type="common">African side-necked turtle</name>
    <dbReference type="NCBI Taxonomy" id="44522"/>
    <lineage>
        <taxon>Eukaryota</taxon>
        <taxon>Metazoa</taxon>
        <taxon>Chordata</taxon>
        <taxon>Craniata</taxon>
        <taxon>Vertebrata</taxon>
        <taxon>Euteleostomi</taxon>
        <taxon>Archelosauria</taxon>
        <taxon>Testudinata</taxon>
        <taxon>Testudines</taxon>
        <taxon>Pleurodira</taxon>
        <taxon>Pelomedusidae</taxon>
        <taxon>Pelomedusa</taxon>
    </lineage>
</organism>
<sequence length="261" mass="29934">MTNQLHPFHMTNPSPWPLTGATAALLMTSGLIMWFHYNSSQLIMLGLLIMLLTLTQWWRDIVRESTFQGHHTPSVQNNLRYGMILFITSEILFFTGFFWAFYHSSLSPTAELGNIWPPTGITPLNPFEVPLLNTAVLLASGVTITWAHHSLMEGNRPQTLQALTLTIILGTYFTILQAMEYFEASFTIADSIYGSTFFVATGFHGLHVIIGSTFLIVCLMRQLKYHFTSHHHFGFEAAAWYWHFVDVIWLFLYLSIYWWGS</sequence>
<protein>
    <recommendedName>
        <fullName>Cytochrome c oxidase subunit 3</fullName>
        <ecNumber>7.1.1.9</ecNumber>
    </recommendedName>
    <alternativeName>
        <fullName>Cytochrome c oxidase polypeptide III</fullName>
    </alternativeName>
</protein>
<feature type="chain" id="PRO_0000183828" description="Cytochrome c oxidase subunit 3">
    <location>
        <begin position="1"/>
        <end position="261"/>
    </location>
</feature>
<feature type="topological domain" description="Mitochondrial matrix" evidence="1">
    <location>
        <begin position="1"/>
        <end position="15"/>
    </location>
</feature>
<feature type="transmembrane region" description="Helical; Name=I" evidence="1">
    <location>
        <begin position="16"/>
        <end position="34"/>
    </location>
</feature>
<feature type="topological domain" description="Mitochondrial intermembrane" evidence="1">
    <location>
        <begin position="35"/>
        <end position="40"/>
    </location>
</feature>
<feature type="transmembrane region" description="Helical; Name=II" evidence="1">
    <location>
        <begin position="41"/>
        <end position="66"/>
    </location>
</feature>
<feature type="topological domain" description="Mitochondrial matrix" evidence="1">
    <location>
        <begin position="67"/>
        <end position="72"/>
    </location>
</feature>
<feature type="transmembrane region" description="Helical; Name=III" evidence="1">
    <location>
        <begin position="73"/>
        <end position="105"/>
    </location>
</feature>
<feature type="topological domain" description="Mitochondrial intermembrane" evidence="1">
    <location>
        <begin position="106"/>
        <end position="128"/>
    </location>
</feature>
<feature type="transmembrane region" description="Helical; Name=IV" evidence="1">
    <location>
        <begin position="129"/>
        <end position="152"/>
    </location>
</feature>
<feature type="topological domain" description="Mitochondrial matrix" evidence="1">
    <location>
        <begin position="153"/>
        <end position="155"/>
    </location>
</feature>
<feature type="transmembrane region" description="Helical; Name=V" evidence="1">
    <location>
        <begin position="156"/>
        <end position="183"/>
    </location>
</feature>
<feature type="topological domain" description="Mitochondrial intermembrane" evidence="1">
    <location>
        <begin position="184"/>
        <end position="190"/>
    </location>
</feature>
<feature type="transmembrane region" description="Helical; Name=VI" evidence="1">
    <location>
        <begin position="191"/>
        <end position="223"/>
    </location>
</feature>
<feature type="topological domain" description="Mitochondrial matrix" evidence="1">
    <location>
        <begin position="224"/>
        <end position="232"/>
    </location>
</feature>
<feature type="transmembrane region" description="Helical; Name=VII" evidence="1">
    <location>
        <begin position="233"/>
        <end position="256"/>
    </location>
</feature>
<feature type="topological domain" description="Mitochondrial intermembrane" evidence="1">
    <location>
        <begin position="257"/>
        <end position="261"/>
    </location>
</feature>
<keyword id="KW-0472">Membrane</keyword>
<keyword id="KW-0496">Mitochondrion</keyword>
<keyword id="KW-0999">Mitochondrion inner membrane</keyword>
<keyword id="KW-1278">Translocase</keyword>
<keyword id="KW-0812">Transmembrane</keyword>
<keyword id="KW-1133">Transmembrane helix</keyword>
<evidence type="ECO:0000250" key="1">
    <source>
        <dbReference type="UniProtKB" id="P00415"/>
    </source>
</evidence>
<evidence type="ECO:0000250" key="2">
    <source>
        <dbReference type="UniProtKB" id="P00420"/>
    </source>
</evidence>
<evidence type="ECO:0000305" key="3"/>
<comment type="function">
    <text evidence="2">Component of the cytochrome c oxidase, the last enzyme in the mitochondrial electron transport chain which drives oxidative phosphorylation. The respiratory chain contains 3 multisubunit complexes succinate dehydrogenase (complex II, CII), ubiquinol-cytochrome c oxidoreductase (cytochrome b-c1 complex, complex III, CIII) and cytochrome c oxidase (complex IV, CIV), that cooperate to transfer electrons derived from NADH and succinate to molecular oxygen, creating an electrochemical gradient over the inner membrane that drives transmembrane transport and the ATP synthase. Cytochrome c oxidase is the component of the respiratory chain that catalyzes the reduction of oxygen to water. Electrons originating from reduced cytochrome c in the intermembrane space (IMS) are transferred via the dinuclear copper A center (CU(A)) of subunit 2 and heme A of subunit 1 to the active site in subunit 1, a binuclear center (BNC) formed by heme A3 and copper B (CU(B)). The BNC reduces molecular oxygen to 2 water molecules using 4 electrons from cytochrome c in the IMS and 4 protons from the mitochondrial matrix.</text>
</comment>
<comment type="catalytic activity">
    <reaction evidence="2">
        <text>4 Fe(II)-[cytochrome c] + O2 + 8 H(+)(in) = 4 Fe(III)-[cytochrome c] + 2 H2O + 4 H(+)(out)</text>
        <dbReference type="Rhea" id="RHEA:11436"/>
        <dbReference type="Rhea" id="RHEA-COMP:10350"/>
        <dbReference type="Rhea" id="RHEA-COMP:14399"/>
        <dbReference type="ChEBI" id="CHEBI:15377"/>
        <dbReference type="ChEBI" id="CHEBI:15378"/>
        <dbReference type="ChEBI" id="CHEBI:15379"/>
        <dbReference type="ChEBI" id="CHEBI:29033"/>
        <dbReference type="ChEBI" id="CHEBI:29034"/>
        <dbReference type="EC" id="7.1.1.9"/>
    </reaction>
    <physiologicalReaction direction="left-to-right" evidence="2">
        <dbReference type="Rhea" id="RHEA:11437"/>
    </physiologicalReaction>
</comment>
<comment type="subunit">
    <text evidence="1">Component of the cytochrome c oxidase (complex IV, CIV), a multisubunit enzyme composed of 14 subunits. The complex is composed of a catalytic core of 3 subunits MT-CO1, MT-CO2 and MT-CO3, encoded in the mitochondrial DNA, and 11 supernumerary subunits COX4I, COX5A, COX5B, COX6A, COX6B, COX6C, COX7A, COX7B, COX7C, COX8 and NDUFA4, which are encoded in the nuclear genome. The complex exists as a monomer or a dimer and forms supercomplexes (SCs) in the inner mitochondrial membrane with NADH-ubiquinone oxidoreductase (complex I, CI) and ubiquinol-cytochrome c oxidoreductase (cytochrome b-c1 complex, complex III, CIII), resulting in different assemblies (supercomplex SCI(1)III(2)IV(1) and megacomplex MCI(2)III(2)IV(2)).</text>
</comment>
<comment type="subcellular location">
    <subcellularLocation>
        <location evidence="1">Mitochondrion inner membrane</location>
        <topology evidence="1">Multi-pass membrane protein</topology>
    </subcellularLocation>
</comment>
<comment type="similarity">
    <text evidence="3">Belongs to the cytochrome c oxidase subunit 3 family.</text>
</comment>
<accession>O79676</accession>
<gene>
    <name type="primary">MT-CO3</name>
    <name type="synonym">COIII</name>
    <name type="synonym">COXIII</name>
    <name type="synonym">MTCO3</name>
</gene>
<dbReference type="EC" id="7.1.1.9"/>
<dbReference type="EMBL" id="AF039066">
    <property type="protein sequence ID" value="AAD05056.1"/>
    <property type="molecule type" value="Genomic_DNA"/>
</dbReference>
<dbReference type="PIR" id="T11107">
    <property type="entry name" value="T11107"/>
</dbReference>
<dbReference type="RefSeq" id="NP_008438.1">
    <property type="nucleotide sequence ID" value="NC_001947.1"/>
</dbReference>
<dbReference type="SMR" id="O79676"/>
<dbReference type="GeneID" id="808279"/>
<dbReference type="CTD" id="4514"/>
<dbReference type="GO" id="GO:0005743">
    <property type="term" value="C:mitochondrial inner membrane"/>
    <property type="evidence" value="ECO:0007669"/>
    <property type="project" value="UniProtKB-SubCell"/>
</dbReference>
<dbReference type="GO" id="GO:0045277">
    <property type="term" value="C:respiratory chain complex IV"/>
    <property type="evidence" value="ECO:0000250"/>
    <property type="project" value="UniProtKB"/>
</dbReference>
<dbReference type="GO" id="GO:0004129">
    <property type="term" value="F:cytochrome-c oxidase activity"/>
    <property type="evidence" value="ECO:0007669"/>
    <property type="project" value="UniProtKB-EC"/>
</dbReference>
<dbReference type="GO" id="GO:0006123">
    <property type="term" value="P:mitochondrial electron transport, cytochrome c to oxygen"/>
    <property type="evidence" value="ECO:0007669"/>
    <property type="project" value="TreeGrafter"/>
</dbReference>
<dbReference type="CDD" id="cd01665">
    <property type="entry name" value="Cyt_c_Oxidase_III"/>
    <property type="match status" value="1"/>
</dbReference>
<dbReference type="FunFam" id="1.10.287.70:FF:000048">
    <property type="entry name" value="Cytochrome c oxidase subunit 3"/>
    <property type="match status" value="1"/>
</dbReference>
<dbReference type="FunFam" id="1.20.120.80:FF:000002">
    <property type="entry name" value="Cytochrome c oxidase subunit 3"/>
    <property type="match status" value="1"/>
</dbReference>
<dbReference type="Gene3D" id="1.10.287.70">
    <property type="match status" value="1"/>
</dbReference>
<dbReference type="Gene3D" id="1.20.120.80">
    <property type="entry name" value="Cytochrome c oxidase, subunit III, four-helix bundle"/>
    <property type="match status" value="1"/>
</dbReference>
<dbReference type="InterPro" id="IPR024791">
    <property type="entry name" value="Cyt_c/ubiquinol_Oxase_su3"/>
</dbReference>
<dbReference type="InterPro" id="IPR033945">
    <property type="entry name" value="Cyt_c_oxase_su3_dom"/>
</dbReference>
<dbReference type="InterPro" id="IPR000298">
    <property type="entry name" value="Cyt_c_oxidase-like_su3"/>
</dbReference>
<dbReference type="InterPro" id="IPR035973">
    <property type="entry name" value="Cyt_c_oxidase_su3-like_sf"/>
</dbReference>
<dbReference type="InterPro" id="IPR013833">
    <property type="entry name" value="Cyt_c_oxidase_su3_a-hlx"/>
</dbReference>
<dbReference type="PANTHER" id="PTHR11403:SF7">
    <property type="entry name" value="CYTOCHROME C OXIDASE SUBUNIT 3"/>
    <property type="match status" value="1"/>
</dbReference>
<dbReference type="PANTHER" id="PTHR11403">
    <property type="entry name" value="CYTOCHROME C OXIDASE SUBUNIT III"/>
    <property type="match status" value="1"/>
</dbReference>
<dbReference type="Pfam" id="PF00510">
    <property type="entry name" value="COX3"/>
    <property type="match status" value="1"/>
</dbReference>
<dbReference type="SUPFAM" id="SSF81452">
    <property type="entry name" value="Cytochrome c oxidase subunit III-like"/>
    <property type="match status" value="1"/>
</dbReference>
<dbReference type="PROSITE" id="PS50253">
    <property type="entry name" value="COX3"/>
    <property type="match status" value="1"/>
</dbReference>
<reference key="1">
    <citation type="journal article" date="1998" name="Proc. Natl. Acad. Sci. U.S.A.">
        <title>Complete mitochondrial genome suggests diapsid affinities of turtles.</title>
        <authorList>
            <person name="Zardoya R."/>
            <person name="Meyer A."/>
        </authorList>
    </citation>
    <scope>NUCLEOTIDE SEQUENCE [GENOMIC DNA]</scope>
</reference>
<geneLocation type="mitochondrion"/>